<reference key="1">
    <citation type="journal article" date="2002" name="Proc. Natl. Acad. Sci. U.S.A.">
        <title>Extensive mosaic structure revealed by the complete genome sequence of uropathogenic Escherichia coli.</title>
        <authorList>
            <person name="Welch R.A."/>
            <person name="Burland V."/>
            <person name="Plunkett G. III"/>
            <person name="Redford P."/>
            <person name="Roesch P."/>
            <person name="Rasko D."/>
            <person name="Buckles E.L."/>
            <person name="Liou S.-R."/>
            <person name="Boutin A."/>
            <person name="Hackett J."/>
            <person name="Stroud D."/>
            <person name="Mayhew G.F."/>
            <person name="Rose D.J."/>
            <person name="Zhou S."/>
            <person name="Schwartz D.C."/>
            <person name="Perna N.T."/>
            <person name="Mobley H.L.T."/>
            <person name="Donnenberg M.S."/>
            <person name="Blattner F.R."/>
        </authorList>
    </citation>
    <scope>NUCLEOTIDE SEQUENCE [LARGE SCALE GENOMIC DNA]</scope>
    <source>
        <strain>CFT073 / ATCC 700928 / UPEC</strain>
    </source>
</reference>
<sequence>MFLVDSHCHLDGLDYESLHKDVDDVLAKAAARDVKFCLAVATTLPGYLHMRDLVGERDNVVFSCGVHPLNQNDPYDVEDLRRLAAEEGVVALGETGLDYYYTPETKVRQQESFIHHIQIGRELNKPVIVHTRDARADTLAILREEKVTDCGGVLHCFTEDRETAGKLLDLGFYISFSGIVTFRNAEQLRDAARYVPLDRLLVETDSPYLAPVPHRGKENQPAMVRDVAEYMAVLKGVAVEELAQVTTDNFARLFHIDASRLQSIR</sequence>
<feature type="chain" id="PRO_0000201997" description="Uncharacterized metal-dependent hydrolase YcfH">
    <location>
        <begin position="1"/>
        <end position="265"/>
    </location>
</feature>
<feature type="binding site" evidence="1">
    <location>
        <position position="7"/>
    </location>
    <ligand>
        <name>a divalent metal cation</name>
        <dbReference type="ChEBI" id="CHEBI:60240"/>
        <label>1</label>
    </ligand>
</feature>
<feature type="binding site" evidence="1">
    <location>
        <position position="9"/>
    </location>
    <ligand>
        <name>a divalent metal cation</name>
        <dbReference type="ChEBI" id="CHEBI:60240"/>
        <label>1</label>
    </ligand>
</feature>
<feature type="binding site" evidence="1">
    <location>
        <position position="94"/>
    </location>
    <ligand>
        <name>a divalent metal cation</name>
        <dbReference type="ChEBI" id="CHEBI:60240"/>
        <label>1</label>
    </ligand>
</feature>
<feature type="binding site" evidence="1">
    <location>
        <position position="94"/>
    </location>
    <ligand>
        <name>a divalent metal cation</name>
        <dbReference type="ChEBI" id="CHEBI:60240"/>
        <label>2</label>
    </ligand>
</feature>
<feature type="binding site" evidence="1">
    <location>
        <position position="130"/>
    </location>
    <ligand>
        <name>a divalent metal cation</name>
        <dbReference type="ChEBI" id="CHEBI:60240"/>
        <label>2</label>
    </ligand>
</feature>
<feature type="binding site" evidence="1">
    <location>
        <position position="155"/>
    </location>
    <ligand>
        <name>a divalent metal cation</name>
        <dbReference type="ChEBI" id="CHEBI:60240"/>
        <label>2</label>
    </ligand>
</feature>
<feature type="binding site" evidence="1">
    <location>
        <position position="205"/>
    </location>
    <ligand>
        <name>a divalent metal cation</name>
        <dbReference type="ChEBI" id="CHEBI:60240"/>
        <label>1</label>
    </ligand>
</feature>
<keyword id="KW-0378">Hydrolase</keyword>
<keyword id="KW-0479">Metal-binding</keyword>
<keyword id="KW-1185">Reference proteome</keyword>
<accession>P0AFQ8</accession>
<accession>P37346</accession>
<accession>P78057</accession>
<protein>
    <recommendedName>
        <fullName evidence="2">Uncharacterized metal-dependent hydrolase YcfH</fullName>
        <ecNumber evidence="2">3.1.-.-</ecNumber>
    </recommendedName>
</protein>
<gene>
    <name type="primary">ycfH</name>
    <name type="ordered locus">c1372</name>
</gene>
<evidence type="ECO:0000250" key="1">
    <source>
        <dbReference type="UniProtKB" id="P0AFQ7"/>
    </source>
</evidence>
<evidence type="ECO:0000305" key="2"/>
<dbReference type="EC" id="3.1.-.-" evidence="2"/>
<dbReference type="EMBL" id="AE014075">
    <property type="protein sequence ID" value="AAN79842.1"/>
    <property type="status" value="ALT_INIT"/>
    <property type="molecule type" value="Genomic_DNA"/>
</dbReference>
<dbReference type="RefSeq" id="WP_000480245.1">
    <property type="nucleotide sequence ID" value="NZ_CP051263.1"/>
</dbReference>
<dbReference type="SMR" id="P0AFQ8"/>
<dbReference type="STRING" id="199310.c1372"/>
<dbReference type="KEGG" id="ecc:c1372"/>
<dbReference type="eggNOG" id="COG0084">
    <property type="taxonomic scope" value="Bacteria"/>
</dbReference>
<dbReference type="HOGENOM" id="CLU_031506_4_0_6"/>
<dbReference type="Proteomes" id="UP000001410">
    <property type="component" value="Chromosome"/>
</dbReference>
<dbReference type="GO" id="GO:0005829">
    <property type="term" value="C:cytosol"/>
    <property type="evidence" value="ECO:0007669"/>
    <property type="project" value="TreeGrafter"/>
</dbReference>
<dbReference type="GO" id="GO:0004536">
    <property type="term" value="F:DNA nuclease activity"/>
    <property type="evidence" value="ECO:0007669"/>
    <property type="project" value="InterPro"/>
</dbReference>
<dbReference type="GO" id="GO:0046872">
    <property type="term" value="F:metal ion binding"/>
    <property type="evidence" value="ECO:0007669"/>
    <property type="project" value="UniProtKB-KW"/>
</dbReference>
<dbReference type="CDD" id="cd01310">
    <property type="entry name" value="TatD_DNAse"/>
    <property type="match status" value="1"/>
</dbReference>
<dbReference type="FunFam" id="3.20.20.140:FF:000005">
    <property type="entry name" value="TatD family hydrolase"/>
    <property type="match status" value="1"/>
</dbReference>
<dbReference type="Gene3D" id="3.20.20.140">
    <property type="entry name" value="Metal-dependent hydrolases"/>
    <property type="match status" value="1"/>
</dbReference>
<dbReference type="InterPro" id="IPR018228">
    <property type="entry name" value="DNase_TatD-rel_CS"/>
</dbReference>
<dbReference type="InterPro" id="IPR032466">
    <property type="entry name" value="Metal_Hydrolase"/>
</dbReference>
<dbReference type="InterPro" id="IPR001130">
    <property type="entry name" value="TatD-like"/>
</dbReference>
<dbReference type="InterPro" id="IPR015991">
    <property type="entry name" value="TatD/YcfH-like"/>
</dbReference>
<dbReference type="NCBIfam" id="NF008075">
    <property type="entry name" value="PRK10812.1"/>
    <property type="match status" value="1"/>
</dbReference>
<dbReference type="NCBIfam" id="TIGR00010">
    <property type="entry name" value="YchF/TatD family DNA exonuclease"/>
    <property type="match status" value="1"/>
</dbReference>
<dbReference type="PANTHER" id="PTHR46124">
    <property type="entry name" value="D-AMINOACYL-TRNA DEACYLASE"/>
    <property type="match status" value="1"/>
</dbReference>
<dbReference type="PANTHER" id="PTHR46124:SF2">
    <property type="entry name" value="D-AMINOACYL-TRNA DEACYLASE"/>
    <property type="match status" value="1"/>
</dbReference>
<dbReference type="Pfam" id="PF01026">
    <property type="entry name" value="TatD_DNase"/>
    <property type="match status" value="1"/>
</dbReference>
<dbReference type="PIRSF" id="PIRSF005902">
    <property type="entry name" value="DNase_TatD"/>
    <property type="match status" value="1"/>
</dbReference>
<dbReference type="SUPFAM" id="SSF51556">
    <property type="entry name" value="Metallo-dependent hydrolases"/>
    <property type="match status" value="1"/>
</dbReference>
<dbReference type="PROSITE" id="PS01137">
    <property type="entry name" value="TATD_1"/>
    <property type="match status" value="1"/>
</dbReference>
<dbReference type="PROSITE" id="PS01091">
    <property type="entry name" value="TATD_3"/>
    <property type="match status" value="1"/>
</dbReference>
<comment type="cofactor">
    <cofactor evidence="1">
        <name>a divalent metal cation</name>
        <dbReference type="ChEBI" id="CHEBI:60240"/>
    </cofactor>
    <text evidence="1">Binds 2 divalent metal cations per subunit.</text>
</comment>
<comment type="similarity">
    <text evidence="2">Belongs to the metallo-dependent hydrolases superfamily. TatD-type hydrolase family.</text>
</comment>
<comment type="sequence caution" evidence="2">
    <conflict type="erroneous initiation">
        <sequence resource="EMBL-CDS" id="AAN79842"/>
    </conflict>
</comment>
<proteinExistence type="inferred from homology"/>
<organism>
    <name type="scientific">Escherichia coli O6:H1 (strain CFT073 / ATCC 700928 / UPEC)</name>
    <dbReference type="NCBI Taxonomy" id="199310"/>
    <lineage>
        <taxon>Bacteria</taxon>
        <taxon>Pseudomonadati</taxon>
        <taxon>Pseudomonadota</taxon>
        <taxon>Gammaproteobacteria</taxon>
        <taxon>Enterobacterales</taxon>
        <taxon>Enterobacteriaceae</taxon>
        <taxon>Escherichia</taxon>
    </lineage>
</organism>
<name>YCFH_ECOL6</name>